<keyword id="KW-0963">Cytoplasm</keyword>
<keyword id="KW-0489">Methyltransferase</keyword>
<keyword id="KW-1185">Reference proteome</keyword>
<keyword id="KW-0698">rRNA processing</keyword>
<keyword id="KW-0949">S-adenosyl-L-methionine</keyword>
<keyword id="KW-0808">Transferase</keyword>
<protein>
    <recommendedName>
        <fullName evidence="1">Ribosomal RNA large subunit methyltransferase M</fullName>
        <ecNumber evidence="1">2.1.1.186</ecNumber>
    </recommendedName>
    <alternativeName>
        <fullName evidence="1">23S rRNA (cytidine2498-2'-O)-methyltransferase</fullName>
    </alternativeName>
    <alternativeName>
        <fullName evidence="1">23S rRNA 2'-O-ribose methyltransferase RlmM</fullName>
    </alternativeName>
</protein>
<gene>
    <name evidence="1" type="primary">rlmM</name>
    <name type="ordered locus">CJA_2381</name>
</gene>
<proteinExistence type="inferred from homology"/>
<organism>
    <name type="scientific">Cellvibrio japonicus (strain Ueda107)</name>
    <name type="common">Pseudomonas fluorescens subsp. cellulosa</name>
    <dbReference type="NCBI Taxonomy" id="498211"/>
    <lineage>
        <taxon>Bacteria</taxon>
        <taxon>Pseudomonadati</taxon>
        <taxon>Pseudomonadota</taxon>
        <taxon>Gammaproteobacteria</taxon>
        <taxon>Cellvibrionales</taxon>
        <taxon>Cellvibrionaceae</taxon>
        <taxon>Cellvibrio</taxon>
    </lineage>
</organism>
<accession>B3PKB3</accession>
<name>RLMM_CELJU</name>
<comment type="function">
    <text evidence="1">Catalyzes the 2'-O-methylation at nucleotide C2498 in 23S rRNA.</text>
</comment>
<comment type="catalytic activity">
    <reaction evidence="1">
        <text>cytidine(2498) in 23S rRNA + S-adenosyl-L-methionine = 2'-O-methylcytidine(2498) in 23S rRNA + S-adenosyl-L-homocysteine + H(+)</text>
        <dbReference type="Rhea" id="RHEA:42788"/>
        <dbReference type="Rhea" id="RHEA-COMP:10244"/>
        <dbReference type="Rhea" id="RHEA-COMP:10245"/>
        <dbReference type="ChEBI" id="CHEBI:15378"/>
        <dbReference type="ChEBI" id="CHEBI:57856"/>
        <dbReference type="ChEBI" id="CHEBI:59789"/>
        <dbReference type="ChEBI" id="CHEBI:74495"/>
        <dbReference type="ChEBI" id="CHEBI:82748"/>
        <dbReference type="EC" id="2.1.1.186"/>
    </reaction>
</comment>
<comment type="subunit">
    <text evidence="1">Monomer.</text>
</comment>
<comment type="subcellular location">
    <subcellularLocation>
        <location evidence="1">Cytoplasm</location>
    </subcellularLocation>
</comment>
<comment type="similarity">
    <text evidence="1">Belongs to the class I-like SAM-binding methyltransferase superfamily. RNA methyltransferase RlmE family. RlmM subfamily.</text>
</comment>
<evidence type="ECO:0000255" key="1">
    <source>
        <dbReference type="HAMAP-Rule" id="MF_01551"/>
    </source>
</evidence>
<feature type="chain" id="PRO_1000201510" description="Ribosomal RNA large subunit methyltransferase M">
    <location>
        <begin position="1"/>
        <end position="350"/>
    </location>
</feature>
<feature type="active site" description="Proton acceptor" evidence="1">
    <location>
        <position position="301"/>
    </location>
</feature>
<feature type="binding site" evidence="1">
    <location>
        <begin position="217"/>
        <end position="220"/>
    </location>
    <ligand>
        <name>S-adenosyl-L-methionine</name>
        <dbReference type="ChEBI" id="CHEBI:59789"/>
    </ligand>
</feature>
<feature type="binding site" evidence="1">
    <location>
        <position position="236"/>
    </location>
    <ligand>
        <name>S-adenosyl-L-methionine</name>
        <dbReference type="ChEBI" id="CHEBI:59789"/>
    </ligand>
</feature>
<feature type="binding site" evidence="1">
    <location>
        <position position="256"/>
    </location>
    <ligand>
        <name>S-adenosyl-L-methionine</name>
        <dbReference type="ChEBI" id="CHEBI:59789"/>
    </ligand>
</feature>
<feature type="binding site" evidence="1">
    <location>
        <position position="272"/>
    </location>
    <ligand>
        <name>S-adenosyl-L-methionine</name>
        <dbReference type="ChEBI" id="CHEBI:59789"/>
    </ligand>
</feature>
<reference key="1">
    <citation type="journal article" date="2008" name="J. Bacteriol.">
        <title>Insights into plant cell wall degradation from the genome sequence of the soil bacterium Cellvibrio japonicus.</title>
        <authorList>
            <person name="DeBoy R.T."/>
            <person name="Mongodin E.F."/>
            <person name="Fouts D.E."/>
            <person name="Tailford L.E."/>
            <person name="Khouri H."/>
            <person name="Emerson J.B."/>
            <person name="Mohamoud Y."/>
            <person name="Watkins K."/>
            <person name="Henrissat B."/>
            <person name="Gilbert H.J."/>
            <person name="Nelson K.E."/>
        </authorList>
    </citation>
    <scope>NUCLEOTIDE SEQUENCE [LARGE SCALE GENOMIC DNA]</scope>
    <source>
        <strain>Ueda107</strain>
    </source>
</reference>
<sequence>MNQLFLHCRPGFEKECAAEITELAAAQGIYGYSKTKDNAAFVVFITQDERGAETLIRQLPFQSLIFVRQWFAGFGNLSDLPVTDRVSPLLEAARALPKTSDLTGETVDTNEGKALSALVKKFLLPFGKALDAHKCLDRKSPWRLHLVFLSGTEAYLGVAPVNNSSAWPMGIPRLRLPKSAPSRATLKLEEAWHHFIPAADWDRRLAPGMRAVDLGAAPGGWTWQLVQRSIYVEAIDNGPMDKDLLDSGLVTHVLADGFLFEPKKPVDWLVCDIVDKPARVSSMVIKWFSKGHCRQAIFNLKLPMKQRYMEVQKCRTRILGELGSLGMRAELDFKQLYHDREEVTGYLRVF</sequence>
<dbReference type="EC" id="2.1.1.186" evidence="1"/>
<dbReference type="EMBL" id="CP000934">
    <property type="protein sequence ID" value="ACE83488.1"/>
    <property type="molecule type" value="Genomic_DNA"/>
</dbReference>
<dbReference type="RefSeq" id="WP_012487979.1">
    <property type="nucleotide sequence ID" value="NC_010995.1"/>
</dbReference>
<dbReference type="SMR" id="B3PKB3"/>
<dbReference type="STRING" id="498211.CJA_2381"/>
<dbReference type="KEGG" id="cja:CJA_2381"/>
<dbReference type="eggNOG" id="COG2933">
    <property type="taxonomic scope" value="Bacteria"/>
</dbReference>
<dbReference type="HOGENOM" id="CLU_043780_0_0_6"/>
<dbReference type="OrthoDB" id="154490at2"/>
<dbReference type="Proteomes" id="UP000001036">
    <property type="component" value="Chromosome"/>
</dbReference>
<dbReference type="GO" id="GO:0005737">
    <property type="term" value="C:cytoplasm"/>
    <property type="evidence" value="ECO:0007669"/>
    <property type="project" value="UniProtKB-SubCell"/>
</dbReference>
<dbReference type="GO" id="GO:0008757">
    <property type="term" value="F:S-adenosylmethionine-dependent methyltransferase activity"/>
    <property type="evidence" value="ECO:0007669"/>
    <property type="project" value="UniProtKB-UniRule"/>
</dbReference>
<dbReference type="GO" id="GO:0032259">
    <property type="term" value="P:methylation"/>
    <property type="evidence" value="ECO:0007669"/>
    <property type="project" value="UniProtKB-KW"/>
</dbReference>
<dbReference type="GO" id="GO:0006364">
    <property type="term" value="P:rRNA processing"/>
    <property type="evidence" value="ECO:0007669"/>
    <property type="project" value="UniProtKB-UniRule"/>
</dbReference>
<dbReference type="Gene3D" id="3.30.2300.20">
    <property type="match status" value="1"/>
</dbReference>
<dbReference type="Gene3D" id="3.30.70.2810">
    <property type="match status" value="1"/>
</dbReference>
<dbReference type="Gene3D" id="3.40.50.150">
    <property type="entry name" value="Vaccinia Virus protein VP39"/>
    <property type="match status" value="1"/>
</dbReference>
<dbReference type="HAMAP" id="MF_01551">
    <property type="entry name" value="23SrRNA_methyltr_M"/>
    <property type="match status" value="1"/>
</dbReference>
<dbReference type="InterPro" id="IPR040739">
    <property type="entry name" value="RlmM_FDX"/>
</dbReference>
<dbReference type="InterPro" id="IPR048646">
    <property type="entry name" value="RlmM_THUMP-like"/>
</dbReference>
<dbReference type="InterPro" id="IPR002877">
    <property type="entry name" value="RNA_MeTrfase_FtsJ_dom"/>
</dbReference>
<dbReference type="InterPro" id="IPR011224">
    <property type="entry name" value="rRNA_MeTrfase_M"/>
</dbReference>
<dbReference type="InterPro" id="IPR029063">
    <property type="entry name" value="SAM-dependent_MTases_sf"/>
</dbReference>
<dbReference type="NCBIfam" id="NF008734">
    <property type="entry name" value="PRK11760.1"/>
    <property type="match status" value="1"/>
</dbReference>
<dbReference type="PANTHER" id="PTHR37524">
    <property type="entry name" value="RIBOSOMAL RNA LARGE SUBUNIT METHYLTRANSFERASE M"/>
    <property type="match status" value="1"/>
</dbReference>
<dbReference type="PANTHER" id="PTHR37524:SF2">
    <property type="entry name" value="RIBOSOMAL RNA METHYLTRANSFERASE FTSJ DOMAIN-CONTAINING PROTEIN"/>
    <property type="match status" value="1"/>
</dbReference>
<dbReference type="Pfam" id="PF01728">
    <property type="entry name" value="FtsJ"/>
    <property type="match status" value="1"/>
</dbReference>
<dbReference type="Pfam" id="PF18125">
    <property type="entry name" value="RlmM_FDX"/>
    <property type="match status" value="1"/>
</dbReference>
<dbReference type="Pfam" id="PF21239">
    <property type="entry name" value="RLMM_N"/>
    <property type="match status" value="1"/>
</dbReference>
<dbReference type="PIRSF" id="PIRSF028774">
    <property type="entry name" value="UCP028774"/>
    <property type="match status" value="1"/>
</dbReference>
<dbReference type="SUPFAM" id="SSF53335">
    <property type="entry name" value="S-adenosyl-L-methionine-dependent methyltransferases"/>
    <property type="match status" value="1"/>
</dbReference>